<gene>
    <name type="primary">murD</name>
    <name type="ordered locus">c0106</name>
</gene>
<protein>
    <recommendedName>
        <fullName>UDP-N-acetylmuramoylalanine--D-glutamate ligase</fullName>
        <ecNumber>6.3.2.9</ecNumber>
    </recommendedName>
    <alternativeName>
        <fullName>D-glutamic acid-adding enzyme</fullName>
    </alternativeName>
    <alternativeName>
        <fullName>UDP-N-acetylmuramoyl-L-alanyl-D-glutamate synthetase</fullName>
    </alternativeName>
</protein>
<keyword id="KW-0067">ATP-binding</keyword>
<keyword id="KW-0131">Cell cycle</keyword>
<keyword id="KW-0132">Cell division</keyword>
<keyword id="KW-0133">Cell shape</keyword>
<keyword id="KW-0961">Cell wall biogenesis/degradation</keyword>
<keyword id="KW-0963">Cytoplasm</keyword>
<keyword id="KW-0436">Ligase</keyword>
<keyword id="KW-0547">Nucleotide-binding</keyword>
<keyword id="KW-0573">Peptidoglycan synthesis</keyword>
<keyword id="KW-1185">Reference proteome</keyword>
<name>MURD_ECOL6</name>
<sequence>MADYQGKNVVIIGLGLTGLSCVDFFLARGVTPRVMDTRMTPPGLDKLPEAVERHTGGLNDEWLMAADLIVASPGIALAHPSLSAAADAGIEIVGDIELFCREAQAPIVAITGSNGKSTVTTLVGEMAKAAGVNVGVGGNIGLPALMLLDDECELYVLELSSFQLETTSSLQAVAATILNVTEDHMDRYPFGLQQYRAAKLRIYENAKVCVVNADDALTMPIRGADERCVSFGVNMGDYHLNHQQGETWLRVKGEKVLNVKEMKLSGQHNYTNALAALALADAAGLPRASSLKALTTFTGLPHRFEVVLEHNGVRWVNDSKATNVGSTEAALNGLHVDGTLHLLLGGDGKSADFSPLARYLNGDNVRLYCFGRDGAQLAALRPEVAEQTETMEQAMRLLATRVQPGDMVLLSPACASLDQFKNFEQRGNEFARLAKELG</sequence>
<dbReference type="EC" id="6.3.2.9"/>
<dbReference type="EMBL" id="AE014075">
    <property type="protein sequence ID" value="AAN78604.1"/>
    <property type="molecule type" value="Genomic_DNA"/>
</dbReference>
<dbReference type="RefSeq" id="WP_000796461.1">
    <property type="nucleotide sequence ID" value="NZ_CP051263.1"/>
</dbReference>
<dbReference type="SMR" id="Q8FL65"/>
<dbReference type="STRING" id="199310.c0106"/>
<dbReference type="KEGG" id="ecc:c0106"/>
<dbReference type="eggNOG" id="COG0771">
    <property type="taxonomic scope" value="Bacteria"/>
</dbReference>
<dbReference type="HOGENOM" id="CLU_032540_1_0_6"/>
<dbReference type="BioCyc" id="ECOL199310:C0106-MONOMER"/>
<dbReference type="UniPathway" id="UPA00219"/>
<dbReference type="Proteomes" id="UP000001410">
    <property type="component" value="Chromosome"/>
</dbReference>
<dbReference type="GO" id="GO:0005737">
    <property type="term" value="C:cytoplasm"/>
    <property type="evidence" value="ECO:0007669"/>
    <property type="project" value="UniProtKB-SubCell"/>
</dbReference>
<dbReference type="GO" id="GO:0005524">
    <property type="term" value="F:ATP binding"/>
    <property type="evidence" value="ECO:0007669"/>
    <property type="project" value="UniProtKB-UniRule"/>
</dbReference>
<dbReference type="GO" id="GO:0008764">
    <property type="term" value="F:UDP-N-acetylmuramoylalanine-D-glutamate ligase activity"/>
    <property type="evidence" value="ECO:0007669"/>
    <property type="project" value="UniProtKB-UniRule"/>
</dbReference>
<dbReference type="GO" id="GO:0051301">
    <property type="term" value="P:cell division"/>
    <property type="evidence" value="ECO:0007669"/>
    <property type="project" value="UniProtKB-KW"/>
</dbReference>
<dbReference type="GO" id="GO:0071555">
    <property type="term" value="P:cell wall organization"/>
    <property type="evidence" value="ECO:0007669"/>
    <property type="project" value="UniProtKB-KW"/>
</dbReference>
<dbReference type="GO" id="GO:0009252">
    <property type="term" value="P:peptidoglycan biosynthetic process"/>
    <property type="evidence" value="ECO:0007669"/>
    <property type="project" value="UniProtKB-UniRule"/>
</dbReference>
<dbReference type="GO" id="GO:0008360">
    <property type="term" value="P:regulation of cell shape"/>
    <property type="evidence" value="ECO:0007669"/>
    <property type="project" value="UniProtKB-KW"/>
</dbReference>
<dbReference type="FunFam" id="3.40.1190.10:FF:000002">
    <property type="entry name" value="UDP-N-acetylmuramoylalanine--D-glutamate ligase"/>
    <property type="match status" value="1"/>
</dbReference>
<dbReference type="FunFam" id="3.40.50.720:FF:000126">
    <property type="entry name" value="UDP-N-acetylmuramoylalanine--D-glutamate ligase"/>
    <property type="match status" value="1"/>
</dbReference>
<dbReference type="FunFam" id="3.90.190.20:FF:000003">
    <property type="entry name" value="UDP-N-acetylmuramoylalanine--D-glutamate ligase"/>
    <property type="match status" value="1"/>
</dbReference>
<dbReference type="Gene3D" id="3.90.190.20">
    <property type="entry name" value="Mur ligase, C-terminal domain"/>
    <property type="match status" value="1"/>
</dbReference>
<dbReference type="Gene3D" id="3.40.1190.10">
    <property type="entry name" value="Mur-like, catalytic domain"/>
    <property type="match status" value="1"/>
</dbReference>
<dbReference type="Gene3D" id="3.40.50.720">
    <property type="entry name" value="NAD(P)-binding Rossmann-like Domain"/>
    <property type="match status" value="1"/>
</dbReference>
<dbReference type="HAMAP" id="MF_00639">
    <property type="entry name" value="MurD"/>
    <property type="match status" value="1"/>
</dbReference>
<dbReference type="InterPro" id="IPR036565">
    <property type="entry name" value="Mur-like_cat_sf"/>
</dbReference>
<dbReference type="InterPro" id="IPR004101">
    <property type="entry name" value="Mur_ligase_C"/>
</dbReference>
<dbReference type="InterPro" id="IPR036615">
    <property type="entry name" value="Mur_ligase_C_dom_sf"/>
</dbReference>
<dbReference type="InterPro" id="IPR013221">
    <property type="entry name" value="Mur_ligase_cen"/>
</dbReference>
<dbReference type="InterPro" id="IPR005762">
    <property type="entry name" value="MurD"/>
</dbReference>
<dbReference type="NCBIfam" id="TIGR01087">
    <property type="entry name" value="murD"/>
    <property type="match status" value="1"/>
</dbReference>
<dbReference type="PANTHER" id="PTHR43692">
    <property type="entry name" value="UDP-N-ACETYLMURAMOYLALANINE--D-GLUTAMATE LIGASE"/>
    <property type="match status" value="1"/>
</dbReference>
<dbReference type="PANTHER" id="PTHR43692:SF1">
    <property type="entry name" value="UDP-N-ACETYLMURAMOYLALANINE--D-GLUTAMATE LIGASE"/>
    <property type="match status" value="1"/>
</dbReference>
<dbReference type="Pfam" id="PF02875">
    <property type="entry name" value="Mur_ligase_C"/>
    <property type="match status" value="1"/>
</dbReference>
<dbReference type="Pfam" id="PF08245">
    <property type="entry name" value="Mur_ligase_M"/>
    <property type="match status" value="1"/>
</dbReference>
<dbReference type="Pfam" id="PF21799">
    <property type="entry name" value="MurD-like_N"/>
    <property type="match status" value="1"/>
</dbReference>
<dbReference type="SUPFAM" id="SSF51984">
    <property type="entry name" value="MurCD N-terminal domain"/>
    <property type="match status" value="1"/>
</dbReference>
<dbReference type="SUPFAM" id="SSF53623">
    <property type="entry name" value="MurD-like peptide ligases, catalytic domain"/>
    <property type="match status" value="1"/>
</dbReference>
<dbReference type="SUPFAM" id="SSF53244">
    <property type="entry name" value="MurD-like peptide ligases, peptide-binding domain"/>
    <property type="match status" value="1"/>
</dbReference>
<feature type="initiator methionine" description="Removed" evidence="1">
    <location>
        <position position="1"/>
    </location>
</feature>
<feature type="chain" id="PRO_0000109015" description="UDP-N-acetylmuramoylalanine--D-glutamate ligase">
    <location>
        <begin position="2"/>
        <end position="438"/>
    </location>
</feature>
<feature type="binding site" evidence="2">
    <location>
        <begin position="112"/>
        <end position="118"/>
    </location>
    <ligand>
        <name>ATP</name>
        <dbReference type="ChEBI" id="CHEBI:30616"/>
    </ligand>
</feature>
<proteinExistence type="inferred from homology"/>
<reference key="1">
    <citation type="journal article" date="2002" name="Proc. Natl. Acad. Sci. U.S.A.">
        <title>Extensive mosaic structure revealed by the complete genome sequence of uropathogenic Escherichia coli.</title>
        <authorList>
            <person name="Welch R.A."/>
            <person name="Burland V."/>
            <person name="Plunkett G. III"/>
            <person name="Redford P."/>
            <person name="Roesch P."/>
            <person name="Rasko D."/>
            <person name="Buckles E.L."/>
            <person name="Liou S.-R."/>
            <person name="Boutin A."/>
            <person name="Hackett J."/>
            <person name="Stroud D."/>
            <person name="Mayhew G.F."/>
            <person name="Rose D.J."/>
            <person name="Zhou S."/>
            <person name="Schwartz D.C."/>
            <person name="Perna N.T."/>
            <person name="Mobley H.L.T."/>
            <person name="Donnenberg M.S."/>
            <person name="Blattner F.R."/>
        </authorList>
    </citation>
    <scope>NUCLEOTIDE SEQUENCE [LARGE SCALE GENOMIC DNA]</scope>
    <source>
        <strain>CFT073 / ATCC 700928 / UPEC</strain>
    </source>
</reference>
<organism>
    <name type="scientific">Escherichia coli O6:H1 (strain CFT073 / ATCC 700928 / UPEC)</name>
    <dbReference type="NCBI Taxonomy" id="199310"/>
    <lineage>
        <taxon>Bacteria</taxon>
        <taxon>Pseudomonadati</taxon>
        <taxon>Pseudomonadota</taxon>
        <taxon>Gammaproteobacteria</taxon>
        <taxon>Enterobacterales</taxon>
        <taxon>Enterobacteriaceae</taxon>
        <taxon>Escherichia</taxon>
    </lineage>
</organism>
<evidence type="ECO:0000250" key="1"/>
<evidence type="ECO:0000255" key="2"/>
<evidence type="ECO:0000305" key="3"/>
<accession>Q8FL65</accession>
<comment type="function">
    <text evidence="1">Cell wall formation. Catalyzes the addition of glutamate to the nucleotide precursor UDP-N-acetylmuramoyl-L-alanine (UMA).</text>
</comment>
<comment type="catalytic activity">
    <reaction>
        <text>UDP-N-acetyl-alpha-D-muramoyl-L-alanine + D-glutamate + ATP = UDP-N-acetyl-alpha-D-muramoyl-L-alanyl-D-glutamate + ADP + phosphate + H(+)</text>
        <dbReference type="Rhea" id="RHEA:16429"/>
        <dbReference type="ChEBI" id="CHEBI:15378"/>
        <dbReference type="ChEBI" id="CHEBI:29986"/>
        <dbReference type="ChEBI" id="CHEBI:30616"/>
        <dbReference type="ChEBI" id="CHEBI:43474"/>
        <dbReference type="ChEBI" id="CHEBI:83898"/>
        <dbReference type="ChEBI" id="CHEBI:83900"/>
        <dbReference type="ChEBI" id="CHEBI:456216"/>
        <dbReference type="EC" id="6.3.2.9"/>
    </reaction>
</comment>
<comment type="pathway">
    <text>Cell wall biogenesis; peptidoglycan biosynthesis.</text>
</comment>
<comment type="subcellular location">
    <subcellularLocation>
        <location evidence="1">Cytoplasm</location>
    </subcellularLocation>
</comment>
<comment type="similarity">
    <text evidence="3">Belongs to the MurCDEF family.</text>
</comment>